<dbReference type="EMBL" id="AM999887">
    <property type="protein sequence ID" value="CAQ54763.1"/>
    <property type="molecule type" value="Genomic_DNA"/>
</dbReference>
<dbReference type="RefSeq" id="WP_007302077.1">
    <property type="nucleotide sequence ID" value="NC_010981.1"/>
</dbReference>
<dbReference type="SMR" id="B3CLJ5"/>
<dbReference type="KEGG" id="wpi:WP0655"/>
<dbReference type="eggNOG" id="COG0359">
    <property type="taxonomic scope" value="Bacteria"/>
</dbReference>
<dbReference type="HOGENOM" id="CLU_078938_1_1_5"/>
<dbReference type="Proteomes" id="UP000008814">
    <property type="component" value="Chromosome"/>
</dbReference>
<dbReference type="GO" id="GO:1990904">
    <property type="term" value="C:ribonucleoprotein complex"/>
    <property type="evidence" value="ECO:0007669"/>
    <property type="project" value="UniProtKB-KW"/>
</dbReference>
<dbReference type="GO" id="GO:0005840">
    <property type="term" value="C:ribosome"/>
    <property type="evidence" value="ECO:0007669"/>
    <property type="project" value="UniProtKB-KW"/>
</dbReference>
<dbReference type="GO" id="GO:0019843">
    <property type="term" value="F:rRNA binding"/>
    <property type="evidence" value="ECO:0007669"/>
    <property type="project" value="UniProtKB-UniRule"/>
</dbReference>
<dbReference type="GO" id="GO:0003735">
    <property type="term" value="F:structural constituent of ribosome"/>
    <property type="evidence" value="ECO:0007669"/>
    <property type="project" value="InterPro"/>
</dbReference>
<dbReference type="GO" id="GO:0006412">
    <property type="term" value="P:translation"/>
    <property type="evidence" value="ECO:0007669"/>
    <property type="project" value="UniProtKB-UniRule"/>
</dbReference>
<dbReference type="Gene3D" id="3.10.430.100">
    <property type="entry name" value="Ribosomal protein L9, C-terminal domain"/>
    <property type="match status" value="1"/>
</dbReference>
<dbReference type="Gene3D" id="3.40.5.10">
    <property type="entry name" value="Ribosomal protein L9, N-terminal domain"/>
    <property type="match status" value="1"/>
</dbReference>
<dbReference type="HAMAP" id="MF_00503">
    <property type="entry name" value="Ribosomal_bL9"/>
    <property type="match status" value="1"/>
</dbReference>
<dbReference type="InterPro" id="IPR000244">
    <property type="entry name" value="Ribosomal_bL9"/>
</dbReference>
<dbReference type="InterPro" id="IPR009027">
    <property type="entry name" value="Ribosomal_bL9/RNase_H1_N"/>
</dbReference>
<dbReference type="InterPro" id="IPR020594">
    <property type="entry name" value="Ribosomal_bL9_bac/chp"/>
</dbReference>
<dbReference type="InterPro" id="IPR020069">
    <property type="entry name" value="Ribosomal_bL9_C"/>
</dbReference>
<dbReference type="InterPro" id="IPR036791">
    <property type="entry name" value="Ribosomal_bL9_C_sf"/>
</dbReference>
<dbReference type="InterPro" id="IPR020070">
    <property type="entry name" value="Ribosomal_bL9_N"/>
</dbReference>
<dbReference type="InterPro" id="IPR036935">
    <property type="entry name" value="Ribosomal_bL9_N_sf"/>
</dbReference>
<dbReference type="NCBIfam" id="TIGR00158">
    <property type="entry name" value="L9"/>
    <property type="match status" value="1"/>
</dbReference>
<dbReference type="PANTHER" id="PTHR21368">
    <property type="entry name" value="50S RIBOSOMAL PROTEIN L9"/>
    <property type="match status" value="1"/>
</dbReference>
<dbReference type="Pfam" id="PF03948">
    <property type="entry name" value="Ribosomal_L9_C"/>
    <property type="match status" value="1"/>
</dbReference>
<dbReference type="Pfam" id="PF01281">
    <property type="entry name" value="Ribosomal_L9_N"/>
    <property type="match status" value="1"/>
</dbReference>
<dbReference type="SUPFAM" id="SSF55658">
    <property type="entry name" value="L9 N-domain-like"/>
    <property type="match status" value="1"/>
</dbReference>
<dbReference type="SUPFAM" id="SSF55653">
    <property type="entry name" value="Ribosomal protein L9 C-domain"/>
    <property type="match status" value="1"/>
</dbReference>
<dbReference type="PROSITE" id="PS00651">
    <property type="entry name" value="RIBOSOMAL_L9"/>
    <property type="match status" value="1"/>
</dbReference>
<accession>B3CLJ5</accession>
<organism>
    <name type="scientific">Wolbachia pipientis subsp. Culex pipiens (strain wPip)</name>
    <dbReference type="NCBI Taxonomy" id="570417"/>
    <lineage>
        <taxon>Bacteria</taxon>
        <taxon>Pseudomonadati</taxon>
        <taxon>Pseudomonadota</taxon>
        <taxon>Alphaproteobacteria</taxon>
        <taxon>Rickettsiales</taxon>
        <taxon>Anaplasmataceae</taxon>
        <taxon>Wolbachieae</taxon>
        <taxon>Wolbachia</taxon>
    </lineage>
</organism>
<name>RL9_WOLPP</name>
<reference key="1">
    <citation type="journal article" date="2008" name="Mol. Biol. Evol.">
        <title>Genome evolution of Wolbachia strain wPip from the Culex pipiens group.</title>
        <authorList>
            <person name="Klasson L."/>
            <person name="Walker T."/>
            <person name="Sebaihia M."/>
            <person name="Sanders M.J."/>
            <person name="Quail M.A."/>
            <person name="Lord A."/>
            <person name="Sanders S."/>
            <person name="Earl J."/>
            <person name="O'Neill S.L."/>
            <person name="Thomson N."/>
            <person name="Sinkins S.P."/>
            <person name="Parkhill J."/>
        </authorList>
    </citation>
    <scope>NUCLEOTIDE SEQUENCE [LARGE SCALE GENOMIC DNA]</scope>
    <source>
        <strain>wPip</strain>
    </source>
</reference>
<protein>
    <recommendedName>
        <fullName evidence="1">Large ribosomal subunit protein bL9</fullName>
    </recommendedName>
    <alternativeName>
        <fullName evidence="3">50S ribosomal protein L9</fullName>
    </alternativeName>
</protein>
<proteinExistence type="inferred from homology"/>
<gene>
    <name evidence="1" type="primary">rplI</name>
    <name type="ordered locus">WP0655</name>
</gene>
<sequence length="184" mass="20608">MLIILKENITTLGKLGEVVKVKPGYARNFLFPQKKAMKATKENLIKLEEQRLLLEEENTKKLNAAKVLASSLHDKFIILIKQASEDGKIFGSVTTREIAKTLLQEGYDISHHSLSLGGISIKNLGEYQVNIELHSKVIVPITIYVVRSEKDAHELRQAKLQNQKSEQQEAEQDASKEAADADDS</sequence>
<feature type="chain" id="PRO_1000126993" description="Large ribosomal subunit protein bL9">
    <location>
        <begin position="1"/>
        <end position="184"/>
    </location>
</feature>
<feature type="region of interest" description="Disordered" evidence="2">
    <location>
        <begin position="156"/>
        <end position="184"/>
    </location>
</feature>
<feature type="compositionally biased region" description="Basic and acidic residues" evidence="2">
    <location>
        <begin position="173"/>
        <end position="184"/>
    </location>
</feature>
<comment type="function">
    <text evidence="1">Binds to the 23S rRNA.</text>
</comment>
<comment type="similarity">
    <text evidence="1">Belongs to the bacterial ribosomal protein bL9 family.</text>
</comment>
<evidence type="ECO:0000255" key="1">
    <source>
        <dbReference type="HAMAP-Rule" id="MF_00503"/>
    </source>
</evidence>
<evidence type="ECO:0000256" key="2">
    <source>
        <dbReference type="SAM" id="MobiDB-lite"/>
    </source>
</evidence>
<evidence type="ECO:0000305" key="3"/>
<keyword id="KW-0687">Ribonucleoprotein</keyword>
<keyword id="KW-0689">Ribosomal protein</keyword>
<keyword id="KW-0694">RNA-binding</keyword>
<keyword id="KW-0699">rRNA-binding</keyword>